<evidence type="ECO:0000250" key="1">
    <source>
        <dbReference type="UniProtKB" id="P32908"/>
    </source>
</evidence>
<evidence type="ECO:0000250" key="2">
    <source>
        <dbReference type="UniProtKB" id="Q14683"/>
    </source>
</evidence>
<evidence type="ECO:0000255" key="3"/>
<evidence type="ECO:0000256" key="4">
    <source>
        <dbReference type="SAM" id="MobiDB-lite"/>
    </source>
</evidence>
<evidence type="ECO:0000269" key="5">
    <source>
    </source>
</evidence>
<evidence type="ECO:0000269" key="6">
    <source>
    </source>
</evidence>
<evidence type="ECO:0000269" key="7">
    <source>
    </source>
</evidence>
<evidence type="ECO:0000305" key="8"/>
<evidence type="ECO:0000312" key="9">
    <source>
        <dbReference type="Proteomes" id="UP000001940"/>
    </source>
</evidence>
<evidence type="ECO:0000312" key="10">
    <source>
        <dbReference type="WormBase" id="F28B3.7a"/>
    </source>
</evidence>
<evidence type="ECO:0000312" key="11">
    <source>
        <dbReference type="WormBase" id="F28B3.7b"/>
    </source>
</evidence>
<organism evidence="9">
    <name type="scientific">Caenorhabditis elegans</name>
    <dbReference type="NCBI Taxonomy" id="6239"/>
    <lineage>
        <taxon>Eukaryota</taxon>
        <taxon>Metazoa</taxon>
        <taxon>Ecdysozoa</taxon>
        <taxon>Nematoda</taxon>
        <taxon>Chromadorea</taxon>
        <taxon>Rhabditida</taxon>
        <taxon>Rhabditina</taxon>
        <taxon>Rhabditomorpha</taxon>
        <taxon>Rhabditoidea</taxon>
        <taxon>Rhabditidae</taxon>
        <taxon>Peloderinae</taxon>
        <taxon>Caenorhabditis</taxon>
    </lineage>
</organism>
<keyword id="KW-0025">Alternative splicing</keyword>
<keyword id="KW-0131">Cell cycle</keyword>
<keyword id="KW-0132">Cell division</keyword>
<keyword id="KW-0158">Chromosome</keyword>
<keyword id="KW-0175">Coiled coil</keyword>
<keyword id="KW-0227">DNA damage</keyword>
<keyword id="KW-0234">DNA repair</keyword>
<keyword id="KW-0498">Mitosis</keyword>
<keyword id="KW-0539">Nucleus</keyword>
<keyword id="KW-1185">Reference proteome</keyword>
<reference evidence="9" key="1">
    <citation type="journal article" date="1998" name="Science">
        <title>Genome sequence of the nematode C. elegans: a platform for investigating biology.</title>
        <authorList>
            <consortium name="The C. elegans sequencing consortium"/>
        </authorList>
    </citation>
    <scope>NUCLEOTIDE SEQUENCE [LARGE SCALE GENOMIC DNA]</scope>
    <source>
        <strain evidence="9">Bristol N2</strain>
    </source>
</reference>
<reference evidence="8" key="2">
    <citation type="journal article" date="2003" name="Mol. Biol. Cell">
        <title>Distinct developmental function of two Caenorhabditis elegans homologs of the cohesin subunit Scc1/Rad21.</title>
        <authorList>
            <person name="Mito Y."/>
            <person name="Sugimoto A."/>
            <person name="Yamamoto M."/>
        </authorList>
    </citation>
    <scope>FUNCTION</scope>
</reference>
<reference evidence="8" key="3">
    <citation type="journal article" date="2003" name="Nature">
        <title>Chromosome cohesion is regulated by a clock gene paralogue TIM-1.</title>
        <authorList>
            <person name="Chan R.C."/>
            <person name="Chan A."/>
            <person name="Jeon M."/>
            <person name="Wu T.F."/>
            <person name="Pasqualone D."/>
            <person name="Rougvie A.E."/>
            <person name="Meyer B.J."/>
        </authorList>
    </citation>
    <scope>FUNCTION</scope>
    <scope>IDENTIFICATION BY MASS SPECTROMETRY</scope>
    <scope>IDENTIFICATION IN THE COHESIN COMPLEX</scope>
    <scope>INTERACTION WITH SCC-1; SCC-3; SMC-3 AND TIM-1</scope>
    <scope>SUBCELLULAR LOCATION</scope>
    <scope>DISRUPTION PHENOTYPE</scope>
</reference>
<reference evidence="8" key="4">
    <citation type="journal article" date="2011" name="Curr. Biol.">
        <title>Loading of meiotic cohesin by SCC-2 is required for early processing of DSBs and for the DNA damage checkpoint.</title>
        <authorList>
            <person name="Lightfoot J."/>
            <person name="Testori S."/>
            <person name="Barroso C."/>
            <person name="Martinez-Perez E."/>
        </authorList>
    </citation>
    <scope>SUBCELLULAR LOCATION</scope>
</reference>
<name>SMC1_CAEEL</name>
<proteinExistence type="evidence at protein level"/>
<comment type="function">
    <text evidence="2 5 6">Involved in chromosome cohesion during cell cycle and in DNA repair (By similarity). Required for chromosome segregation during mitosis (PubMed:12808038, PubMed:12827206). Central component of cohesin complex (PubMed:12827206). The cohesin complex is required for the cohesion of sister chromatids after DNA replication (PubMed:12827206). The cohesin complex apparently forms a large proteinaceous ring within which sister chromatids can be trapped (By similarity). At anaphase, the complex is cleaved and dissociates from chromatin, allowing sister chromatids to segregate (By similarity).</text>
</comment>
<comment type="subunit">
    <text evidence="6">Component of the cohesin complex, composed of the smc-1 and smc-3 heterodimer attached via their SMC hinge domain, scc-1 which links them, and scc-3. Interacts with smc-3, scc-1, scc-3 and tim-1.</text>
</comment>
<comment type="subcellular location">
    <subcellularLocation>
        <location evidence="6 7">Nucleus</location>
    </subcellularLocation>
    <subcellularLocation>
        <location evidence="6 7">Chromosome</location>
    </subcellularLocation>
    <text evidence="6 7">Has diffuse nuclear appearance at interphase during mitosis in somatic and germline tissues (PubMed:12827206). Colocalizes with rec-8 along synapsed chromosomes during meiotic pachytene and diakinesis (PubMed:12827206). Diffuse nuclear accumulation in meiotic pachytene (PubMed:21856158).</text>
</comment>
<comment type="alternative products">
    <event type="alternative splicing"/>
    <isoform>
        <id>O01789-1</id>
        <name evidence="10">a</name>
        <sequence type="displayed"/>
    </isoform>
    <isoform>
        <id>O01789-2</id>
        <name evidence="11">b</name>
        <sequence type="described" ref="VSP_057589"/>
    </isoform>
</comment>
<comment type="disruption phenotype">
    <text evidence="5 6">Defective chromosome segregation during germline mitosis, resulting in aneuploidy (PubMed:12827206). RNAi-mediated knock-down is embryonic lethal and results in aberrant chromosome segregation in mitosis (PubMed:12808038, PubMed:12827206).</text>
</comment>
<comment type="similarity">
    <text evidence="8">Belongs to the SMC family. SMC1 subfamily.</text>
</comment>
<accession>O01789</accession>
<accession>Q2A957</accession>
<protein>
    <recommendedName>
        <fullName evidence="10">Structural maintenance of chromosomes protein 1</fullName>
    </recommendedName>
    <alternativeName>
        <fullName evidence="10">High incidence of males protein 1</fullName>
    </alternativeName>
</protein>
<feature type="chain" id="PRO_0000432834" description="Structural maintenance of chromosomes protein 1" evidence="8">
    <location>
        <begin position="1"/>
        <end position="1262"/>
    </location>
</feature>
<feature type="domain" description="SMC hinge">
    <location>
        <begin position="524"/>
        <end position="642"/>
    </location>
</feature>
<feature type="region of interest" description="Disordered" evidence="4">
    <location>
        <begin position="965"/>
        <end position="994"/>
    </location>
</feature>
<feature type="coiled-coil region" evidence="3">
    <location>
        <begin position="171"/>
        <end position="497"/>
    </location>
</feature>
<feature type="coiled-coil region" evidence="3">
    <location>
        <begin position="680"/>
        <end position="937"/>
    </location>
</feature>
<feature type="coiled-coil region" evidence="3">
    <location>
        <begin position="1017"/>
        <end position="1086"/>
    </location>
</feature>
<feature type="short sequence motif" description="DA-box" evidence="1">
    <location>
        <begin position="1148"/>
        <end position="1183"/>
    </location>
</feature>
<feature type="compositionally biased region" description="Polar residues" evidence="4">
    <location>
        <begin position="974"/>
        <end position="991"/>
    </location>
</feature>
<feature type="splice variant" id="VSP_057589" description="In isoform b." evidence="8">
    <location>
        <begin position="1"/>
        <end position="1122"/>
    </location>
</feature>
<dbReference type="EMBL" id="FO081198">
    <property type="protein sequence ID" value="CCD69832.1"/>
    <property type="molecule type" value="Genomic_DNA"/>
</dbReference>
<dbReference type="EMBL" id="FO081198">
    <property type="protein sequence ID" value="CCD69826.1"/>
    <property type="molecule type" value="Genomic_DNA"/>
</dbReference>
<dbReference type="RefSeq" id="NP_001040658.2">
    <molecule id="O01789-1"/>
    <property type="nucleotide sequence ID" value="NM_001047193.6"/>
</dbReference>
<dbReference type="RefSeq" id="NP_001040659.1">
    <molecule id="O01789-2"/>
    <property type="nucleotide sequence ID" value="NM_001047194.3"/>
</dbReference>
<dbReference type="SMR" id="O01789"/>
<dbReference type="ComplexPortal" id="CPX-967">
    <property type="entry name" value="Nuclear mitotic cohesin complex"/>
</dbReference>
<dbReference type="FunCoup" id="O01789">
    <property type="interactions" value="2191"/>
</dbReference>
<dbReference type="STRING" id="6239.F28B3.7a.1"/>
<dbReference type="PaxDb" id="6239-F28B3.7a"/>
<dbReference type="PeptideAtlas" id="O01789"/>
<dbReference type="EnsemblMetazoa" id="F28B3.7a.1">
    <molecule id="O01789-1"/>
    <property type="protein sequence ID" value="F28B3.7a.1"/>
    <property type="gene ID" value="WBGene00001860"/>
</dbReference>
<dbReference type="EnsemblMetazoa" id="F28B3.7b.1">
    <molecule id="O01789-2"/>
    <property type="protein sequence ID" value="F28B3.7b.1"/>
    <property type="gene ID" value="WBGene00001860"/>
</dbReference>
<dbReference type="GeneID" id="172116"/>
<dbReference type="KEGG" id="cel:CELE_F28B3.7"/>
<dbReference type="UCSC" id="F28B3.7a.1">
    <property type="organism name" value="c. elegans"/>
</dbReference>
<dbReference type="AGR" id="WB:WBGene00001860"/>
<dbReference type="CTD" id="172116"/>
<dbReference type="WormBase" id="F28B3.7a">
    <molecule id="O01789-1"/>
    <property type="protein sequence ID" value="CE42002"/>
    <property type="gene ID" value="WBGene00001860"/>
    <property type="gene designation" value="him-1"/>
</dbReference>
<dbReference type="WormBase" id="F28B3.7b">
    <molecule id="O01789-2"/>
    <property type="protein sequence ID" value="CE39925"/>
    <property type="gene ID" value="WBGene00001860"/>
    <property type="gene designation" value="him-1"/>
</dbReference>
<dbReference type="eggNOG" id="KOG0018">
    <property type="taxonomic scope" value="Eukaryota"/>
</dbReference>
<dbReference type="GeneTree" id="ENSGT00940000171089"/>
<dbReference type="HOGENOM" id="CLU_001042_0_2_1"/>
<dbReference type="InParanoid" id="O01789"/>
<dbReference type="OMA" id="HKARCWD"/>
<dbReference type="OrthoDB" id="413649at2759"/>
<dbReference type="PhylomeDB" id="O01789"/>
<dbReference type="Reactome" id="R-CEL-2468052">
    <property type="pathway name" value="Establishment of Sister Chromatid Cohesion"/>
</dbReference>
<dbReference type="Reactome" id="R-CEL-2470946">
    <property type="pathway name" value="Cohesin Loading onto Chromatin"/>
</dbReference>
<dbReference type="Reactome" id="R-CEL-2500257">
    <property type="pathway name" value="Resolution of Sister Chromatid Cohesion"/>
</dbReference>
<dbReference type="Reactome" id="R-CEL-3108214">
    <property type="pathway name" value="SUMOylation of DNA damage response and repair proteins"/>
</dbReference>
<dbReference type="PRO" id="PR:O01789"/>
<dbReference type="Proteomes" id="UP000001940">
    <property type="component" value="Chromosome I"/>
</dbReference>
<dbReference type="Bgee" id="WBGene00001860">
    <property type="expression patterns" value="Expressed in germ line (C elegans) and 4 other cell types or tissues"/>
</dbReference>
<dbReference type="GO" id="GO:0000785">
    <property type="term" value="C:chromatin"/>
    <property type="evidence" value="ECO:0000314"/>
    <property type="project" value="WormBase"/>
</dbReference>
<dbReference type="GO" id="GO:0008278">
    <property type="term" value="C:cohesin complex"/>
    <property type="evidence" value="ECO:0000353"/>
    <property type="project" value="WormBase"/>
</dbReference>
<dbReference type="GO" id="GO:0000444">
    <property type="term" value="C:MIS12/MIND type complex"/>
    <property type="evidence" value="ECO:0000314"/>
    <property type="project" value="ComplexPortal"/>
</dbReference>
<dbReference type="GO" id="GO:0005634">
    <property type="term" value="C:nucleus"/>
    <property type="evidence" value="ECO:0000314"/>
    <property type="project" value="WormBase"/>
</dbReference>
<dbReference type="GO" id="GO:0005524">
    <property type="term" value="F:ATP binding"/>
    <property type="evidence" value="ECO:0007669"/>
    <property type="project" value="InterPro"/>
</dbReference>
<dbReference type="GO" id="GO:0016887">
    <property type="term" value="F:ATP hydrolysis activity"/>
    <property type="evidence" value="ECO:0007669"/>
    <property type="project" value="InterPro"/>
</dbReference>
<dbReference type="GO" id="GO:0003677">
    <property type="term" value="F:DNA binding"/>
    <property type="evidence" value="ECO:0000314"/>
    <property type="project" value="WormBase"/>
</dbReference>
<dbReference type="GO" id="GO:0051301">
    <property type="term" value="P:cell division"/>
    <property type="evidence" value="ECO:0007669"/>
    <property type="project" value="UniProtKB-KW"/>
</dbReference>
<dbReference type="GO" id="GO:0007059">
    <property type="term" value="P:chromosome segregation"/>
    <property type="evidence" value="ECO:0000315"/>
    <property type="project" value="WormBase"/>
</dbReference>
<dbReference type="GO" id="GO:0006281">
    <property type="term" value="P:DNA repair"/>
    <property type="evidence" value="ECO:0007669"/>
    <property type="project" value="UniProtKB-KW"/>
</dbReference>
<dbReference type="GO" id="GO:0009792">
    <property type="term" value="P:embryo development ending in birth or egg hatching"/>
    <property type="evidence" value="ECO:0000315"/>
    <property type="project" value="WormBase"/>
</dbReference>
<dbReference type="GO" id="GO:0034087">
    <property type="term" value="P:establishment of mitotic sister chromatid cohesion"/>
    <property type="evidence" value="ECO:0000314"/>
    <property type="project" value="ComplexPortal"/>
</dbReference>
<dbReference type="GO" id="GO:0007064">
    <property type="term" value="P:mitotic sister chromatid cohesion"/>
    <property type="evidence" value="ECO:0000250"/>
    <property type="project" value="WormBase"/>
</dbReference>
<dbReference type="GO" id="GO:0009411">
    <property type="term" value="P:response to UV"/>
    <property type="evidence" value="ECO:0000315"/>
    <property type="project" value="WormBase"/>
</dbReference>
<dbReference type="GO" id="GO:0010165">
    <property type="term" value="P:response to X-ray"/>
    <property type="evidence" value="ECO:0000315"/>
    <property type="project" value="WormBase"/>
</dbReference>
<dbReference type="GO" id="GO:0007062">
    <property type="term" value="P:sister chromatid cohesion"/>
    <property type="evidence" value="ECO:0000318"/>
    <property type="project" value="GO_Central"/>
</dbReference>
<dbReference type="CDD" id="cd03275">
    <property type="entry name" value="ABC_SMC1_euk"/>
    <property type="match status" value="2"/>
</dbReference>
<dbReference type="FunFam" id="1.20.1060.20:FF:000001">
    <property type="entry name" value="Structural maintenance of chromosomes 1A"/>
    <property type="match status" value="1"/>
</dbReference>
<dbReference type="FunFam" id="3.40.50.300:FF:000564">
    <property type="entry name" value="Structural maintenance of chromosomes 1A"/>
    <property type="match status" value="1"/>
</dbReference>
<dbReference type="FunFam" id="3.40.50.300:FF:002923">
    <property type="entry name" value="Structural maintenance of chromosomes protein"/>
    <property type="match status" value="1"/>
</dbReference>
<dbReference type="Gene3D" id="1.20.1060.20">
    <property type="match status" value="1"/>
</dbReference>
<dbReference type="Gene3D" id="3.30.70.1620">
    <property type="match status" value="1"/>
</dbReference>
<dbReference type="Gene3D" id="3.40.50.300">
    <property type="entry name" value="P-loop containing nucleotide triphosphate hydrolases"/>
    <property type="match status" value="2"/>
</dbReference>
<dbReference type="InterPro" id="IPR027417">
    <property type="entry name" value="P-loop_NTPase"/>
</dbReference>
<dbReference type="InterPro" id="IPR003395">
    <property type="entry name" value="RecF/RecN/SMC_N"/>
</dbReference>
<dbReference type="InterPro" id="IPR024704">
    <property type="entry name" value="SMC"/>
</dbReference>
<dbReference type="InterPro" id="IPR028468">
    <property type="entry name" value="Smc1_ABC"/>
</dbReference>
<dbReference type="InterPro" id="IPR010935">
    <property type="entry name" value="SMC_hinge"/>
</dbReference>
<dbReference type="InterPro" id="IPR036277">
    <property type="entry name" value="SMC_hinge_sf"/>
</dbReference>
<dbReference type="PANTHER" id="PTHR18937:SF12">
    <property type="entry name" value="STRUCTURAL MAINTENANCE OF CHROMOSOMES PROTEIN"/>
    <property type="match status" value="1"/>
</dbReference>
<dbReference type="PANTHER" id="PTHR18937">
    <property type="entry name" value="STRUCTURAL MAINTENANCE OF CHROMOSOMES SMC FAMILY MEMBER"/>
    <property type="match status" value="1"/>
</dbReference>
<dbReference type="Pfam" id="PF06470">
    <property type="entry name" value="SMC_hinge"/>
    <property type="match status" value="1"/>
</dbReference>
<dbReference type="Pfam" id="PF02463">
    <property type="entry name" value="SMC_N"/>
    <property type="match status" value="1"/>
</dbReference>
<dbReference type="PIRSF" id="PIRSF005719">
    <property type="entry name" value="SMC"/>
    <property type="match status" value="1"/>
</dbReference>
<dbReference type="SMART" id="SM00968">
    <property type="entry name" value="SMC_hinge"/>
    <property type="match status" value="1"/>
</dbReference>
<dbReference type="SUPFAM" id="SSF52540">
    <property type="entry name" value="P-loop containing nucleoside triphosphate hydrolases"/>
    <property type="match status" value="1"/>
</dbReference>
<dbReference type="SUPFAM" id="SSF75553">
    <property type="entry name" value="Smc hinge domain"/>
    <property type="match status" value="1"/>
</dbReference>
<gene>
    <name evidence="10" type="primary">him-1</name>
    <name evidence="10" type="synonym">smc-1</name>
    <name evidence="10" type="ORF">F28B3.7</name>
</gene>
<sequence length="1262" mass="144217">MRGGSSLDSFPGKGTLHTLEIENFKSYKGKHTIGPFTRFTAIIGPNGSGKSNLMDAISFVLGEKPSSLRVRKYADLIHGAPINKPVAKKCRVTMNYKYSDGKVKAFTRGVNNGTSEHLLDGQTVTSAAYSQEMESINIFIKARNFLVYQGAIENIAMKTPKERTQLFEELSRSHEFQAEYERLKVEMTKAEDDTQHNMNKRRGIAQEKREAKMEKDEAEKYQTMKNELAAKSTMLFLHQLFHCERTIDESKEEINAQKKTIASLEATRSKEEAKIAAVHQEHRKALREVQKMTRKLDQKETDLAEKQQNMLTLKVSVAHEHKKLEIAKKMLAAAESKAENNSTQLADLKKSKKELEKKKAAYEAEIQDMMQRGELNLSDEQVREYGQLKDQAQRESAMVQRELLMAEQVFEGDKSSLNHELRRQKEHQERVKAKEGDVRRIETQIATLAQRIKETEEETKILKADLKKIENDVVIDKSAAAEYNKELVAVVRQLSEASGDSAEGERNQRRTEALEGLKKNFPESVYGRLVDLCQPSHKRFNIATTKILQKHMNSIVCDTEETAAKAIVYLKDHRYPPETFLPNDALVVNPLNEKLREIKKPAGVKLVFDVINPQHQAARKALQFVCGNALVCESQEDAKQLAYGGGELKDRFKAVSMDGTLFQQSGVMSGGSADLRQKSKKWDEKVVKQLREKRNQLNEKIADLQKHRRRELEVESVRSKINGNEQRLAMMKRDLKNMREMQLERLQNELEGMTAEMNMLPPRISNCQEKLERSESTLKSLQTKSNEVADRIFADFCTRVGIASIRDYENREMRIKQEMEDKLRSFDDDIQKLAYEIDFVTEQDGNRKVEVEKEKVSQIDRQYKDMKKKEKTAAAALKEHTESMEQDKEVLEEKKALSHKLETEWNEVKKIAQVAMKDFTKAEKELLRLESLLTKKQYERHSLLHSVKLGQIALPLKSGSMADVEYEEDDGDDTASQSSQSATDGPSVSEEQIQREQHIKINYDSLPREYKDVDDDDGVRQMSNRLNVEIDELQKNVSKMNAPNLKANQRMAEVKEREAESTEELENARKKAKRIRQQFEKVKTDRYRRFQDFFDPVANTIDDIYKQLSRNTSAQAFLGADNMEEPYLDGIQYNCVAPGKRFRPMDNLSGGEKTIAALALLFAVHGRNPAPFFVLDEIDAALDNTNIGKVASYICESAREHMQIIVISLKEEFYNKADSLIGIFPYPAACTTSGVLTFDLTRFKQIGLNEMTENPPTPSIAT</sequence>